<accession>Q44584</accession>
<keyword id="KW-0104">Cadmium</keyword>
<keyword id="KW-0105">Cadmium resistance</keyword>
<keyword id="KW-0170">Cobalt</keyword>
<keyword id="KW-0533">Nickel</keyword>
<keyword id="KW-0614">Plasmid</keyword>
<keyword id="KW-0732">Signal</keyword>
<keyword id="KW-0813">Transport</keyword>
<reference key="1">
    <citation type="journal article" date="1994" name="J. Bacteriol.">
        <title>Combined nickel-cobalt-cadmium resistance encoded by the ncc locus of Alcaligenes xylosoxidans 31A.</title>
        <authorList>
            <person name="Schmidt T."/>
            <person name="Schlegel H.G."/>
        </authorList>
    </citation>
    <scope>NUCLEOTIDE SEQUENCE [GENOMIC DNA]</scope>
    <source>
        <strain>31A</strain>
    </source>
</reference>
<evidence type="ECO:0000255" key="1"/>
<evidence type="ECO:0000305" key="2"/>
<name>NCCC_ALCXX</name>
<geneLocation type="plasmid">
    <name>pTOM9</name>
</geneLocation>
<protein>
    <recommendedName>
        <fullName>Nickel-cobalt-cadmium resistance protein NccC</fullName>
    </recommendedName>
</protein>
<gene>
    <name type="primary">nccC</name>
</gene>
<sequence>MGAVLKAEANIFRSHPFRPMNQATPKKLRSAPCIGVALLLMATGSIQAAEAPPYSVLLQQSLAMAPTMMVQAANVRAAGADAAQARAWLNPRFDTLAENLGAPSSGGQSQRQNTYSITQPFEIGGKRGARIEVGERNYEAAQARERQLRVNYAAELAVAYATAEAAFGRQALAEENLALANEELTVARALVETGKEATLRTAQAQASVSAAQAIEAAASSDVTSTLARLSALSGATEAYTGISSSLLSAQPAMTPGGTTTDDSPAVRTAEAERNAFDAQVNVERKRWIPEVGITAGVRRYGWSNESGYIVGLTASIPLFDRNRNGIDAAVQRVAAAQARLDTVRLEANAARRSAVSQVAATDKQLAAASQGEQAASEAYRVGRLGYEAGKTPLVELLAVRRALVDARQLTIDARLARVRALAALAQADGRLAFEESR</sequence>
<comment type="function">
    <text>Component of the NCC cation-efflux system that confers resistance to nickel, cobalt and cadmium.</text>
</comment>
<comment type="similarity">
    <text evidence="2">Belongs to the outer membrane factor (OMF) (TC 1.B.17) family.</text>
</comment>
<feature type="signal peptide" evidence="1">
    <location>
        <begin position="1"/>
        <end position="48"/>
    </location>
</feature>
<feature type="chain" id="PRO_0000021792" description="Nickel-cobalt-cadmium resistance protein NccC">
    <location>
        <begin position="49"/>
        <end position="437"/>
    </location>
</feature>
<organism>
    <name type="scientific">Alcaligenes xylosoxydans xylosoxydans</name>
    <name type="common">Achromobacter xylosoxidans</name>
    <dbReference type="NCBI Taxonomy" id="85698"/>
    <lineage>
        <taxon>Bacteria</taxon>
        <taxon>Pseudomonadati</taxon>
        <taxon>Pseudomonadota</taxon>
        <taxon>Betaproteobacteria</taxon>
        <taxon>Burkholderiales</taxon>
        <taxon>Alcaligenaceae</taxon>
        <taxon>Achromobacter</taxon>
    </lineage>
</organism>
<proteinExistence type="inferred from homology"/>
<dbReference type="EMBL" id="L31363">
    <property type="protein sequence ID" value="AAA65104.1"/>
    <property type="molecule type" value="Genomic_DNA"/>
</dbReference>
<dbReference type="PIR" id="I39578">
    <property type="entry name" value="I39578"/>
</dbReference>
<dbReference type="SMR" id="Q44584"/>
<dbReference type="TCDB" id="2.A.6.1.12">
    <property type="family name" value="the resistance-nodulation-cell division (rnd) superfamily"/>
</dbReference>
<dbReference type="GO" id="GO:0015562">
    <property type="term" value="F:efflux transmembrane transporter activity"/>
    <property type="evidence" value="ECO:0007669"/>
    <property type="project" value="InterPro"/>
</dbReference>
<dbReference type="GO" id="GO:0046686">
    <property type="term" value="P:response to cadmium ion"/>
    <property type="evidence" value="ECO:0007669"/>
    <property type="project" value="UniProtKB-KW"/>
</dbReference>
<dbReference type="Gene3D" id="1.20.1600.10">
    <property type="entry name" value="Outer membrane efflux proteins (OEP)"/>
    <property type="match status" value="1"/>
</dbReference>
<dbReference type="InterPro" id="IPR050737">
    <property type="entry name" value="OMF"/>
</dbReference>
<dbReference type="InterPro" id="IPR003423">
    <property type="entry name" value="OMP_efflux"/>
</dbReference>
<dbReference type="PANTHER" id="PTHR30203:SF24">
    <property type="entry name" value="BLR4935 PROTEIN"/>
    <property type="match status" value="1"/>
</dbReference>
<dbReference type="PANTHER" id="PTHR30203">
    <property type="entry name" value="OUTER MEMBRANE CATION EFFLUX PROTEIN"/>
    <property type="match status" value="1"/>
</dbReference>
<dbReference type="Pfam" id="PF02321">
    <property type="entry name" value="OEP"/>
    <property type="match status" value="2"/>
</dbReference>
<dbReference type="SUPFAM" id="SSF56954">
    <property type="entry name" value="Outer membrane efflux proteins (OEP)"/>
    <property type="match status" value="1"/>
</dbReference>